<feature type="chain" id="PRO_1000125091" description="Histidine ammonia-lyase">
    <location>
        <begin position="1"/>
        <end position="505"/>
    </location>
</feature>
<feature type="modified residue" description="2,3-didehydroalanine (Ser)" evidence="1">
    <location>
        <position position="142"/>
    </location>
</feature>
<feature type="cross-link" description="5-imidazolinone (Ala-Gly)" evidence="1">
    <location>
        <begin position="141"/>
        <end position="143"/>
    </location>
</feature>
<name>HUTH_BACCQ</name>
<gene>
    <name evidence="1" type="primary">hutH</name>
    <name type="ordered locus">BCQ_3452</name>
</gene>
<organism>
    <name type="scientific">Bacillus cereus (strain Q1)</name>
    <dbReference type="NCBI Taxonomy" id="361100"/>
    <lineage>
        <taxon>Bacteria</taxon>
        <taxon>Bacillati</taxon>
        <taxon>Bacillota</taxon>
        <taxon>Bacilli</taxon>
        <taxon>Bacillales</taxon>
        <taxon>Bacillaceae</taxon>
        <taxon>Bacillus</taxon>
        <taxon>Bacillus cereus group</taxon>
    </lineage>
</organism>
<keyword id="KW-0963">Cytoplasm</keyword>
<keyword id="KW-0369">Histidine metabolism</keyword>
<keyword id="KW-0456">Lyase</keyword>
<comment type="catalytic activity">
    <reaction evidence="1">
        <text>L-histidine = trans-urocanate + NH4(+)</text>
        <dbReference type="Rhea" id="RHEA:21232"/>
        <dbReference type="ChEBI" id="CHEBI:17771"/>
        <dbReference type="ChEBI" id="CHEBI:28938"/>
        <dbReference type="ChEBI" id="CHEBI:57595"/>
        <dbReference type="EC" id="4.3.1.3"/>
    </reaction>
</comment>
<comment type="pathway">
    <text evidence="1">Amino-acid degradation; L-histidine degradation into L-glutamate; N-formimidoyl-L-glutamate from L-histidine: step 1/3.</text>
</comment>
<comment type="subcellular location">
    <subcellularLocation>
        <location evidence="1">Cytoplasm</location>
    </subcellularLocation>
</comment>
<comment type="PTM">
    <text evidence="1">Contains an active site 4-methylidene-imidazol-5-one (MIO), which is formed autocatalytically by cyclization and dehydration of residues Ala-Ser-Gly.</text>
</comment>
<comment type="similarity">
    <text evidence="1">Belongs to the PAL/histidase family.</text>
</comment>
<dbReference type="EC" id="4.3.1.3" evidence="1"/>
<dbReference type="EMBL" id="CP000227">
    <property type="protein sequence ID" value="ACM13880.1"/>
    <property type="molecule type" value="Genomic_DNA"/>
</dbReference>
<dbReference type="SMR" id="B9IUH0"/>
<dbReference type="KEGG" id="bcq:BCQ_3452"/>
<dbReference type="HOGENOM" id="CLU_014801_4_0_9"/>
<dbReference type="UniPathway" id="UPA00379">
    <property type="reaction ID" value="UER00549"/>
</dbReference>
<dbReference type="Proteomes" id="UP000000441">
    <property type="component" value="Chromosome"/>
</dbReference>
<dbReference type="GO" id="GO:0005737">
    <property type="term" value="C:cytoplasm"/>
    <property type="evidence" value="ECO:0007669"/>
    <property type="project" value="UniProtKB-SubCell"/>
</dbReference>
<dbReference type="GO" id="GO:0004397">
    <property type="term" value="F:histidine ammonia-lyase activity"/>
    <property type="evidence" value="ECO:0007669"/>
    <property type="project" value="UniProtKB-UniRule"/>
</dbReference>
<dbReference type="GO" id="GO:0019556">
    <property type="term" value="P:L-histidine catabolic process to glutamate and formamide"/>
    <property type="evidence" value="ECO:0007669"/>
    <property type="project" value="UniProtKB-UniPathway"/>
</dbReference>
<dbReference type="GO" id="GO:0019557">
    <property type="term" value="P:L-histidine catabolic process to glutamate and formate"/>
    <property type="evidence" value="ECO:0007669"/>
    <property type="project" value="UniProtKB-UniPathway"/>
</dbReference>
<dbReference type="CDD" id="cd00332">
    <property type="entry name" value="PAL-HAL"/>
    <property type="match status" value="1"/>
</dbReference>
<dbReference type="FunFam" id="1.10.275.10:FF:000008">
    <property type="entry name" value="Histidine ammonia-lyase"/>
    <property type="match status" value="1"/>
</dbReference>
<dbReference type="FunFam" id="1.20.200.10:FF:000003">
    <property type="entry name" value="Histidine ammonia-lyase"/>
    <property type="match status" value="1"/>
</dbReference>
<dbReference type="Gene3D" id="1.20.200.10">
    <property type="entry name" value="Fumarase/aspartase (Central domain)"/>
    <property type="match status" value="1"/>
</dbReference>
<dbReference type="Gene3D" id="1.10.275.10">
    <property type="entry name" value="Fumarase/aspartase (N-terminal domain)"/>
    <property type="match status" value="1"/>
</dbReference>
<dbReference type="HAMAP" id="MF_00229">
    <property type="entry name" value="His_ammonia_lyase"/>
    <property type="match status" value="1"/>
</dbReference>
<dbReference type="InterPro" id="IPR001106">
    <property type="entry name" value="Aromatic_Lyase"/>
</dbReference>
<dbReference type="InterPro" id="IPR024083">
    <property type="entry name" value="Fumarase/histidase_N"/>
</dbReference>
<dbReference type="InterPro" id="IPR005921">
    <property type="entry name" value="HutH"/>
</dbReference>
<dbReference type="InterPro" id="IPR008948">
    <property type="entry name" value="L-Aspartase-like"/>
</dbReference>
<dbReference type="InterPro" id="IPR022313">
    <property type="entry name" value="Phe/His_NH3-lyase_AS"/>
</dbReference>
<dbReference type="NCBIfam" id="TIGR01225">
    <property type="entry name" value="hutH"/>
    <property type="match status" value="1"/>
</dbReference>
<dbReference type="NCBIfam" id="NF006871">
    <property type="entry name" value="PRK09367.1"/>
    <property type="match status" value="1"/>
</dbReference>
<dbReference type="PANTHER" id="PTHR10362">
    <property type="entry name" value="HISTIDINE AMMONIA-LYASE"/>
    <property type="match status" value="1"/>
</dbReference>
<dbReference type="Pfam" id="PF00221">
    <property type="entry name" value="Lyase_aromatic"/>
    <property type="match status" value="1"/>
</dbReference>
<dbReference type="SUPFAM" id="SSF48557">
    <property type="entry name" value="L-aspartase-like"/>
    <property type="match status" value="1"/>
</dbReference>
<dbReference type="PROSITE" id="PS00488">
    <property type="entry name" value="PAL_HISTIDASE"/>
    <property type="match status" value="1"/>
</dbReference>
<protein>
    <recommendedName>
        <fullName evidence="1">Histidine ammonia-lyase</fullName>
        <shortName evidence="1">Histidase</shortName>
        <ecNumber evidence="1">4.3.1.3</ecNumber>
    </recommendedName>
</protein>
<sequence length="505" mass="55443">MITLTGHTLTIEEMKRLLLEGEGVTACPNSMQKVAECREVVEKIVEDGKVVYGITTGFGKFSDVLIQKDDVKALQHNLIQSHACGIGDPFPEEVSRGMLILRANTMLKGVSGVRPLVVNMLLEFVNRKIHPVVPQQGSLGASGDLAPLSHLALVLLGEGEVFYKGKRVHAMVALTEEGLEPIELEAKEGLALINGTQAMTAQGVLSYIEAEATAYQAEFIASMTIEGLQGIIDAFDENVHKARGYKEQVEVASRIRDILHDSKLTTKQGELRVQDAYSLRCIPQVHGASWQVLNYVKEKLEIEMNAATDNPLIFDGGEKVISGGNFHGQPIAFAMDFLKVGMAELANISERRIERLVNPQLNDLPPFLSPEPGLQSGAMIMQYAAASLVSENKTLAHPASVDSIPSSANQEDHVSMGTIASRHAHQIIQNVRRVLSIEMICAMQAAEYRGIENMSTVTKSFYHQGRQQVPSITNDRIFSTDIENIAYWLKTNYSIKERLDVNAAL</sequence>
<accession>B9IUH0</accession>
<evidence type="ECO:0000255" key="1">
    <source>
        <dbReference type="HAMAP-Rule" id="MF_00229"/>
    </source>
</evidence>
<proteinExistence type="inferred from homology"/>
<reference key="1">
    <citation type="journal article" date="2009" name="J. Bacteriol.">
        <title>Complete genome sequence of the extremophilic Bacillus cereus strain Q1 with industrial applications.</title>
        <authorList>
            <person name="Xiong Z."/>
            <person name="Jiang Y."/>
            <person name="Qi D."/>
            <person name="Lu H."/>
            <person name="Yang F."/>
            <person name="Yang J."/>
            <person name="Chen L."/>
            <person name="Sun L."/>
            <person name="Xu X."/>
            <person name="Xue Y."/>
            <person name="Zhu Y."/>
            <person name="Jin Q."/>
        </authorList>
    </citation>
    <scope>NUCLEOTIDE SEQUENCE [LARGE SCALE GENOMIC DNA]</scope>
    <source>
        <strain>Q1</strain>
    </source>
</reference>